<dbReference type="GO" id="GO:0005576">
    <property type="term" value="C:extracellular region"/>
    <property type="evidence" value="ECO:0007669"/>
    <property type="project" value="UniProtKB-SubCell"/>
</dbReference>
<dbReference type="GO" id="GO:0007218">
    <property type="term" value="P:neuropeptide signaling pathway"/>
    <property type="evidence" value="ECO:0007669"/>
    <property type="project" value="UniProtKB-KW"/>
</dbReference>
<feature type="peptide" id="PRO_0000043449" description="Leucokinin-4">
    <location>
        <begin position="1"/>
        <end position="8"/>
    </location>
</feature>
<feature type="modified residue" description="Glycine amide" evidence="1">
    <location>
        <position position="8"/>
    </location>
</feature>
<comment type="function">
    <text>This cephalomyotropic peptide stimulates contractile activity of cockroach protodeum (hindgut).</text>
</comment>
<comment type="subcellular location">
    <subcellularLocation>
        <location>Secreted</location>
    </subcellularLocation>
</comment>
<organism>
    <name type="scientific">Rhyparobia maderae</name>
    <name type="common">Madeira cockroach</name>
    <name type="synonym">Leucophaea maderae</name>
    <dbReference type="NCBI Taxonomy" id="36963"/>
    <lineage>
        <taxon>Eukaryota</taxon>
        <taxon>Metazoa</taxon>
        <taxon>Ecdysozoa</taxon>
        <taxon>Arthropoda</taxon>
        <taxon>Hexapoda</taxon>
        <taxon>Insecta</taxon>
        <taxon>Pterygota</taxon>
        <taxon>Neoptera</taxon>
        <taxon>Polyneoptera</taxon>
        <taxon>Dictyoptera</taxon>
        <taxon>Blattodea</taxon>
        <taxon>Blaberoidea</taxon>
        <taxon>Blaberidae</taxon>
        <taxon>Oxyhaloinae</taxon>
        <taxon>Rhyparobia</taxon>
    </lineage>
</organism>
<accession>P21143</accession>
<proteinExistence type="evidence at protein level"/>
<reference key="1">
    <citation type="journal article" date="1986" name="Comp. Biochem. Physiol.">
        <title>Primary structure and synthesis of two additional neuropeptides from Leucophaea maderae: members of a new family of Cephalomyotropins.</title>
        <authorList>
            <person name="Holman G.M."/>
            <person name="Cook B.J."/>
            <person name="Nachman R.J."/>
        </authorList>
    </citation>
    <scope>PROTEIN SEQUENCE</scope>
    <scope>AMIDATION AT GLY-8</scope>
    <scope>SYNTHESIS</scope>
    <source>
        <tissue>Head</tissue>
    </source>
</reference>
<sequence>DASFHSWG</sequence>
<evidence type="ECO:0000269" key="1">
    <source ref="1"/>
</evidence>
<keyword id="KW-0027">Amidation</keyword>
<keyword id="KW-0903">Direct protein sequencing</keyword>
<keyword id="KW-0527">Neuropeptide</keyword>
<keyword id="KW-0964">Secreted</keyword>
<protein>
    <recommendedName>
        <fullName>Leucokinin-4</fullName>
    </recommendedName>
    <alternativeName>
        <fullName>Leucokinin IV</fullName>
        <shortName>L-IV</shortName>
    </alternativeName>
</protein>
<name>LCK4_RHYMA</name>